<feature type="chain" id="PRO_0000046408" description="Calcium-transporting ATPase 4, endoplasmic reticulum-type">
    <location>
        <begin position="1"/>
        <end position="1061"/>
    </location>
</feature>
<feature type="topological domain" description="Cytoplasmic" evidence="2">
    <location>
        <begin position="1"/>
        <end position="70"/>
    </location>
</feature>
<feature type="transmembrane region" description="Helical" evidence="2">
    <location>
        <begin position="71"/>
        <end position="91"/>
    </location>
</feature>
<feature type="topological domain" description="Lumenal" evidence="2">
    <location>
        <begin position="92"/>
        <end position="115"/>
    </location>
</feature>
<feature type="transmembrane region" description="Helical" evidence="2">
    <location>
        <begin position="116"/>
        <end position="135"/>
    </location>
</feature>
<feature type="topological domain" description="Cytoplasmic" evidence="2">
    <location>
        <begin position="136"/>
        <end position="278"/>
    </location>
</feature>
<feature type="transmembrane region" description="Helical" evidence="2">
    <location>
        <begin position="279"/>
        <end position="298"/>
    </location>
</feature>
<feature type="topological domain" description="Lumenal" evidence="2">
    <location>
        <begin position="299"/>
        <end position="327"/>
    </location>
</feature>
<feature type="transmembrane region" description="Helical" evidence="2">
    <location>
        <begin position="328"/>
        <end position="345"/>
    </location>
</feature>
<feature type="topological domain" description="Cytoplasmic" evidence="2">
    <location>
        <begin position="346"/>
        <end position="786"/>
    </location>
</feature>
<feature type="transmembrane region" description="Helical" evidence="2">
    <location>
        <begin position="787"/>
        <end position="806"/>
    </location>
</feature>
<feature type="topological domain" description="Lumenal" evidence="2">
    <location>
        <begin position="807"/>
        <end position="816"/>
    </location>
</feature>
<feature type="transmembrane region" description="Helical" evidence="2">
    <location>
        <begin position="817"/>
        <end position="837"/>
    </location>
</feature>
<feature type="topological domain" description="Cytoplasmic" evidence="2">
    <location>
        <begin position="838"/>
        <end position="857"/>
    </location>
</feature>
<feature type="transmembrane region" description="Helical" evidence="2">
    <location>
        <begin position="858"/>
        <end position="880"/>
    </location>
</feature>
<feature type="topological domain" description="Lumenal" evidence="2">
    <location>
        <begin position="881"/>
        <end position="950"/>
    </location>
</feature>
<feature type="transmembrane region" description="Helical" evidence="2">
    <location>
        <begin position="951"/>
        <end position="970"/>
    </location>
</feature>
<feature type="topological domain" description="Cytoplasmic" evidence="2">
    <location>
        <begin position="971"/>
        <end position="983"/>
    </location>
</feature>
<feature type="transmembrane region" description="Helical" evidence="2">
    <location>
        <begin position="984"/>
        <end position="1002"/>
    </location>
</feature>
<feature type="topological domain" description="Lumenal" evidence="2">
    <location>
        <begin position="1003"/>
        <end position="1017"/>
    </location>
</feature>
<feature type="transmembrane region" description="Helical" evidence="2">
    <location>
        <begin position="1018"/>
        <end position="1038"/>
    </location>
</feature>
<feature type="topological domain" description="Cytoplasmic" evidence="2">
    <location>
        <begin position="1039"/>
        <end position="1061"/>
    </location>
</feature>
<feature type="region of interest" description="Disordered" evidence="3">
    <location>
        <begin position="1"/>
        <end position="21"/>
    </location>
</feature>
<feature type="active site" description="4-aspartylphosphate intermediate" evidence="1">
    <location>
        <position position="383"/>
    </location>
</feature>
<feature type="binding site" evidence="1">
    <location>
        <position position="336"/>
    </location>
    <ligand>
        <name>Ca(2+)</name>
        <dbReference type="ChEBI" id="CHEBI:29108"/>
        <label>2</label>
    </ligand>
</feature>
<feature type="binding site" evidence="1">
    <location>
        <position position="337"/>
    </location>
    <ligand>
        <name>Ca(2+)</name>
        <dbReference type="ChEBI" id="CHEBI:29108"/>
        <label>2</label>
    </ligand>
</feature>
<feature type="binding site" evidence="1">
    <location>
        <position position="339"/>
    </location>
    <ligand>
        <name>Ca(2+)</name>
        <dbReference type="ChEBI" id="CHEBI:29108"/>
        <label>2</label>
    </ligand>
</feature>
<feature type="binding site" evidence="1">
    <location>
        <position position="341"/>
    </location>
    <ligand>
        <name>Ca(2+)</name>
        <dbReference type="ChEBI" id="CHEBI:29108"/>
        <label>2</label>
    </ligand>
</feature>
<feature type="binding site" evidence="1">
    <location>
        <position position="731"/>
    </location>
    <ligand>
        <name>Mg(2+)</name>
        <dbReference type="ChEBI" id="CHEBI:18420"/>
    </ligand>
</feature>
<feature type="binding site" evidence="1">
    <location>
        <position position="735"/>
    </location>
    <ligand>
        <name>Mg(2+)</name>
        <dbReference type="ChEBI" id="CHEBI:18420"/>
    </ligand>
</feature>
<feature type="binding site" evidence="1">
    <location>
        <position position="797"/>
    </location>
    <ligand>
        <name>Ca(2+)</name>
        <dbReference type="ChEBI" id="CHEBI:29108"/>
        <label>1</label>
    </ligand>
</feature>
<feature type="binding site" evidence="1">
    <location>
        <position position="800"/>
    </location>
    <ligand>
        <name>Ca(2+)</name>
        <dbReference type="ChEBI" id="CHEBI:29108"/>
        <label>1</label>
    </ligand>
</feature>
<feature type="binding site" evidence="1">
    <location>
        <position position="825"/>
    </location>
    <ligand>
        <name>Ca(2+)</name>
        <dbReference type="ChEBI" id="CHEBI:29108"/>
        <label>2</label>
    </ligand>
</feature>
<feature type="binding site" evidence="1">
    <location>
        <position position="828"/>
    </location>
    <ligand>
        <name>Ca(2+)</name>
        <dbReference type="ChEBI" id="CHEBI:29108"/>
        <label>1</label>
    </ligand>
</feature>
<feature type="binding site" evidence="1">
    <location>
        <position position="829"/>
    </location>
    <ligand>
        <name>Ca(2+)</name>
        <dbReference type="ChEBI" id="CHEBI:29108"/>
        <label>1</label>
    </ligand>
</feature>
<feature type="binding site" evidence="1">
    <location>
        <position position="829"/>
    </location>
    <ligand>
        <name>Ca(2+)</name>
        <dbReference type="ChEBI" id="CHEBI:29108"/>
        <label>2</label>
    </ligand>
</feature>
<feature type="binding site" evidence="1">
    <location>
        <position position="961"/>
    </location>
    <ligand>
        <name>Ca(2+)</name>
        <dbReference type="ChEBI" id="CHEBI:29108"/>
        <label>1</label>
    </ligand>
</feature>
<feature type="sequence conflict" description="In Ref. 3; AAD29957." evidence="5" ref="3">
    <original>P</original>
    <variation>H</variation>
    <location>
        <position position="314"/>
    </location>
</feature>
<feature type="sequence conflict" description="In Ref. 3; AAD29957." evidence="5" ref="3">
    <original>T</original>
    <variation>M</variation>
    <location>
        <position position="430"/>
    </location>
</feature>
<feature type="sequence conflict" description="In Ref. 3; AAD29957." evidence="5" ref="3">
    <original>M</original>
    <variation>S</variation>
    <location>
        <position position="439"/>
    </location>
</feature>
<feature type="sequence conflict" description="In Ref. 3; AAD29957." evidence="5" ref="3">
    <original>T</original>
    <variation>I</variation>
    <location>
        <position position="659"/>
    </location>
</feature>
<feature type="sequence conflict" description="In Ref. 3; AAD29957." evidence="5" ref="3">
    <original>T</original>
    <variation>P</variation>
    <location>
        <position position="859"/>
    </location>
</feature>
<feature type="sequence conflict" description="In Ref. 3; AAD29957." evidence="5" ref="3">
    <original>G</original>
    <variation>V</variation>
    <location>
        <position position="1046"/>
    </location>
</feature>
<protein>
    <recommendedName>
        <fullName>Calcium-transporting ATPase 4, endoplasmic reticulum-type</fullName>
        <ecNumber>7.2.2.10</ecNumber>
    </recommendedName>
</protein>
<accession>Q9XES1</accession>
<accession>Q9LQP2</accession>
<name>ECA4_ARATH</name>
<evidence type="ECO:0000250" key="1"/>
<evidence type="ECO:0000255" key="2"/>
<evidence type="ECO:0000256" key="3">
    <source>
        <dbReference type="SAM" id="MobiDB-lite"/>
    </source>
</evidence>
<evidence type="ECO:0000269" key="4">
    <source>
    </source>
</evidence>
<evidence type="ECO:0000305" key="5"/>
<reference key="1">
    <citation type="journal article" date="2000" name="Nature">
        <title>Sequence and analysis of chromosome 1 of the plant Arabidopsis thaliana.</title>
        <authorList>
            <person name="Theologis A."/>
            <person name="Ecker J.R."/>
            <person name="Palm C.J."/>
            <person name="Federspiel N.A."/>
            <person name="Kaul S."/>
            <person name="White O."/>
            <person name="Alonso J."/>
            <person name="Altafi H."/>
            <person name="Araujo R."/>
            <person name="Bowman C.L."/>
            <person name="Brooks S.Y."/>
            <person name="Buehler E."/>
            <person name="Chan A."/>
            <person name="Chao Q."/>
            <person name="Chen H."/>
            <person name="Cheuk R.F."/>
            <person name="Chin C.W."/>
            <person name="Chung M.K."/>
            <person name="Conn L."/>
            <person name="Conway A.B."/>
            <person name="Conway A.R."/>
            <person name="Creasy T.H."/>
            <person name="Dewar K."/>
            <person name="Dunn P."/>
            <person name="Etgu P."/>
            <person name="Feldblyum T.V."/>
            <person name="Feng J.-D."/>
            <person name="Fong B."/>
            <person name="Fujii C.Y."/>
            <person name="Gill J.E."/>
            <person name="Goldsmith A.D."/>
            <person name="Haas B."/>
            <person name="Hansen N.F."/>
            <person name="Hughes B."/>
            <person name="Huizar L."/>
            <person name="Hunter J.L."/>
            <person name="Jenkins J."/>
            <person name="Johnson-Hopson C."/>
            <person name="Khan S."/>
            <person name="Khaykin E."/>
            <person name="Kim C.J."/>
            <person name="Koo H.L."/>
            <person name="Kremenetskaia I."/>
            <person name="Kurtz D.B."/>
            <person name="Kwan A."/>
            <person name="Lam B."/>
            <person name="Langin-Hooper S."/>
            <person name="Lee A."/>
            <person name="Lee J.M."/>
            <person name="Lenz C.A."/>
            <person name="Li J.H."/>
            <person name="Li Y.-P."/>
            <person name="Lin X."/>
            <person name="Liu S.X."/>
            <person name="Liu Z.A."/>
            <person name="Luros J.S."/>
            <person name="Maiti R."/>
            <person name="Marziali A."/>
            <person name="Militscher J."/>
            <person name="Miranda M."/>
            <person name="Nguyen M."/>
            <person name="Nierman W.C."/>
            <person name="Osborne B.I."/>
            <person name="Pai G."/>
            <person name="Peterson J."/>
            <person name="Pham P.K."/>
            <person name="Rizzo M."/>
            <person name="Rooney T."/>
            <person name="Rowley D."/>
            <person name="Sakano H."/>
            <person name="Salzberg S.L."/>
            <person name="Schwartz J.R."/>
            <person name="Shinn P."/>
            <person name="Southwick A.M."/>
            <person name="Sun H."/>
            <person name="Tallon L.J."/>
            <person name="Tambunga G."/>
            <person name="Toriumi M.J."/>
            <person name="Town C.D."/>
            <person name="Utterback T."/>
            <person name="Van Aken S."/>
            <person name="Vaysberg M."/>
            <person name="Vysotskaia V.S."/>
            <person name="Walker M."/>
            <person name="Wu D."/>
            <person name="Yu G."/>
            <person name="Fraser C.M."/>
            <person name="Venter J.C."/>
            <person name="Davis R.W."/>
        </authorList>
    </citation>
    <scope>NUCLEOTIDE SEQUENCE [LARGE SCALE GENOMIC DNA]</scope>
    <source>
        <strain>cv. Columbia</strain>
    </source>
</reference>
<reference key="2">
    <citation type="journal article" date="2017" name="Plant J.">
        <title>Araport11: a complete reannotation of the Arabidopsis thaliana reference genome.</title>
        <authorList>
            <person name="Cheng C.Y."/>
            <person name="Krishnakumar V."/>
            <person name="Chan A.P."/>
            <person name="Thibaud-Nissen F."/>
            <person name="Schobel S."/>
            <person name="Town C.D."/>
        </authorList>
    </citation>
    <scope>GENOME REANNOTATION</scope>
    <source>
        <strain>cv. Columbia</strain>
    </source>
</reference>
<reference key="3">
    <citation type="online journal article" date="1999" name="Plant Gene Register">
        <title>AtECA3 encodes a homolog of endoplasmic reticulum-type Ca2+-ATPase from Arabidopsis thaliana.</title>
        <authorList>
            <person name="Liang F."/>
            <person name="Sze H."/>
        </authorList>
        <locator>PGR99-077</locator>
    </citation>
    <scope>NUCLEOTIDE SEQUENCE [MRNA] OF 283-1061</scope>
    <source>
        <strain>cv. Columbia</strain>
    </source>
</reference>
<reference key="4">
    <citation type="journal article" date="2006" name="Proteomics">
        <title>The early responses of Arabidopsis thaliana cells to cadmium exposure explored by protein and metabolite profiling analyses.</title>
        <authorList>
            <person name="Sarry J.-E."/>
            <person name="Kuhn L."/>
            <person name="Ducruix C."/>
            <person name="Lafaye A."/>
            <person name="Junot C."/>
            <person name="Hugouvieux V."/>
            <person name="Jourdain A."/>
            <person name="Bastien O."/>
            <person name="Fievet J.B."/>
            <person name="Vailhen D."/>
            <person name="Amekraz B."/>
            <person name="Moulin C."/>
            <person name="Ezan E."/>
            <person name="Garin J."/>
            <person name="Bourguignon J."/>
        </authorList>
    </citation>
    <scope>INDUCTION BY CADMIUM</scope>
    <source>
        <strain>cv. Columbia</strain>
    </source>
</reference>
<keyword id="KW-0067">ATP-binding</keyword>
<keyword id="KW-0106">Calcium</keyword>
<keyword id="KW-0109">Calcium transport</keyword>
<keyword id="KW-0406">Ion transport</keyword>
<keyword id="KW-0460">Magnesium</keyword>
<keyword id="KW-0472">Membrane</keyword>
<keyword id="KW-0479">Metal-binding</keyword>
<keyword id="KW-0547">Nucleotide-binding</keyword>
<keyword id="KW-1185">Reference proteome</keyword>
<keyword id="KW-1278">Translocase</keyword>
<keyword id="KW-0812">Transmembrane</keyword>
<keyword id="KW-1133">Transmembrane helix</keyword>
<keyword id="KW-0813">Transport</keyword>
<sequence>MGKGGEDCGNKQTNSSELVKSDTFPAWGKDVSECEEKFGVSREKGLSTDEVLKRHQIYGLNELEKPEGTSIFKLILEQFNDTLVRILLAAAVISFVLAFFDGDEGGEMGITAFVEPLVIFLILIVNAIVGIWQETNAEKALEALKEIQSQQATVMRDGTKVSSLPAKELVPGDIVELRVGDKVPADMRVVALISSTLRVEQGSLTGESEAVSKTTKHVDENADIQGKKCMVFAGTTVVNGNCICLVTDTGMNTEIGRVHSQIQEAAQHEEDTPLKKKLNEFGEVLTMIIGLICALVWLINVKYFLSWEYVDGWPRNFKFSFEKCTYYFEIAVALAVAAIPEGLPAVITTCLALGTRKMAQKNALVRKLPSVETLGCTTVICSDKTGTLTTNQMAVSKLVAMGSRIGTLRSFNVEGTSFDPRDGKIEDWPTGRMDANLQMIAKIAAICNDANVEKSDQQFVSRGMPTEAALKVLVEKMGFPEGLNEASSDGNVLRCCRLWSELEQRIATLEFDRDRKSMGVMVDSSSGKKLLLVKGAVENVLERSTHIQLLDGSTRELDQYSRDLILQSLHDMSLSALRCLGFAYSDVPSDFATYDGSEDHPAHQQLLNPSNYSSIESNLVFVGFVGLRDPPRKEVRQAIADCRTAGIRVMVITGDNKSTAEAICREIGVFEADEDISSRSLTGKEFMDVKDQKNHLRQTGGLLFSRAEPKHKQEIVRLLKEDGEVVAMTGDGVNDAPALKLADIGVAMGISGTEVAKEASDLVLADDNFSTIVAAVGEGRSIYNNMKAFIRYMISSNIGEVASIFLTAALGIPEGMIPVQLLWVNLVTDGPPATALGFNPPDKDIMKKPPRRSDDSLITAWILFRYMVIGLYVGVATVGVFIIWYTHNSFMGIDLSQDGHSLVSYSQLAHWGQCSSWEGFKVSPFTAGSQTFSFDSNPCDYFQQGKIKASTLSLSVLVAIEMFNSLNALSEDGSLVTMPPWVNPWLLLAMAVSFGLHFVILYVPFLAQVFGIVPLSLNEWLLVLAVSLPVILIDEVLKFVGRCTSGYRYSPRTPSAKQKEE</sequence>
<gene>
    <name type="primary">ECA4</name>
    <name type="ordered locus">At1g07670</name>
    <name type="ORF">F24B9.24</name>
</gene>
<organism>
    <name type="scientific">Arabidopsis thaliana</name>
    <name type="common">Mouse-ear cress</name>
    <dbReference type="NCBI Taxonomy" id="3702"/>
    <lineage>
        <taxon>Eukaryota</taxon>
        <taxon>Viridiplantae</taxon>
        <taxon>Streptophyta</taxon>
        <taxon>Embryophyta</taxon>
        <taxon>Tracheophyta</taxon>
        <taxon>Spermatophyta</taxon>
        <taxon>Magnoliopsida</taxon>
        <taxon>eudicotyledons</taxon>
        <taxon>Gunneridae</taxon>
        <taxon>Pentapetalae</taxon>
        <taxon>rosids</taxon>
        <taxon>malvids</taxon>
        <taxon>Brassicales</taxon>
        <taxon>Brassicaceae</taxon>
        <taxon>Camelineae</taxon>
        <taxon>Arabidopsis</taxon>
    </lineage>
</organism>
<dbReference type="EC" id="7.2.2.10"/>
<dbReference type="EMBL" id="AC007583">
    <property type="protein sequence ID" value="AAF75088.1"/>
    <property type="molecule type" value="Genomic_DNA"/>
</dbReference>
<dbReference type="EMBL" id="CP002684">
    <property type="protein sequence ID" value="AEE28160.1"/>
    <property type="molecule type" value="Genomic_DNA"/>
</dbReference>
<dbReference type="EMBL" id="CP002684">
    <property type="protein sequence ID" value="ANM58604.1"/>
    <property type="molecule type" value="Genomic_DNA"/>
</dbReference>
<dbReference type="EMBL" id="AF117125">
    <property type="protein sequence ID" value="AAD29957.1"/>
    <property type="molecule type" value="mRNA"/>
</dbReference>
<dbReference type="PIR" id="F86211">
    <property type="entry name" value="F86211"/>
</dbReference>
<dbReference type="PIR" id="T52332">
    <property type="entry name" value="T52332"/>
</dbReference>
<dbReference type="RefSeq" id="NP_001321027.1">
    <property type="nucleotide sequence ID" value="NM_001331716.1"/>
</dbReference>
<dbReference type="RefSeq" id="NP_172246.3">
    <property type="nucleotide sequence ID" value="NM_100640.4"/>
</dbReference>
<dbReference type="SMR" id="Q9XES1"/>
<dbReference type="BioGRID" id="22521">
    <property type="interactions" value="1"/>
</dbReference>
<dbReference type="FunCoup" id="Q9XES1">
    <property type="interactions" value="1288"/>
</dbReference>
<dbReference type="STRING" id="3702.Q9XES1"/>
<dbReference type="SwissPalm" id="Q9XES1"/>
<dbReference type="PaxDb" id="3702-AT1G07670.1"/>
<dbReference type="ProteomicsDB" id="222047"/>
<dbReference type="EnsemblPlants" id="AT1G07670.1">
    <property type="protein sequence ID" value="AT1G07670.1"/>
    <property type="gene ID" value="AT1G07670"/>
</dbReference>
<dbReference type="EnsemblPlants" id="AT1G07670.2">
    <property type="protein sequence ID" value="AT1G07670.2"/>
    <property type="gene ID" value="AT1G07670"/>
</dbReference>
<dbReference type="GeneID" id="837280"/>
<dbReference type="Gramene" id="AT1G07670.1">
    <property type="protein sequence ID" value="AT1G07670.1"/>
    <property type="gene ID" value="AT1G07670"/>
</dbReference>
<dbReference type="Gramene" id="AT1G07670.2">
    <property type="protein sequence ID" value="AT1G07670.2"/>
    <property type="gene ID" value="AT1G07670"/>
</dbReference>
<dbReference type="KEGG" id="ath:AT1G07670"/>
<dbReference type="Araport" id="AT1G07670"/>
<dbReference type="TAIR" id="AT1G07670">
    <property type="gene designation" value="ECA4"/>
</dbReference>
<dbReference type="eggNOG" id="KOG0202">
    <property type="taxonomic scope" value="Eukaryota"/>
</dbReference>
<dbReference type="HOGENOM" id="CLU_002360_3_2_1"/>
<dbReference type="InParanoid" id="Q9XES1"/>
<dbReference type="OMA" id="INNIFWE"/>
<dbReference type="PhylomeDB" id="Q9XES1"/>
<dbReference type="BioCyc" id="ARA:AT1G07670-MONOMER"/>
<dbReference type="BRENDA" id="7.2.2.10">
    <property type="organism ID" value="399"/>
</dbReference>
<dbReference type="PRO" id="PR:Q9XES1"/>
<dbReference type="Proteomes" id="UP000006548">
    <property type="component" value="Chromosome 1"/>
</dbReference>
<dbReference type="ExpressionAtlas" id="Q9XES1">
    <property type="expression patterns" value="baseline and differential"/>
</dbReference>
<dbReference type="GO" id="GO:0005783">
    <property type="term" value="C:endoplasmic reticulum"/>
    <property type="evidence" value="ECO:0007005"/>
    <property type="project" value="TAIR"/>
</dbReference>
<dbReference type="GO" id="GO:0005576">
    <property type="term" value="C:extracellular region"/>
    <property type="evidence" value="ECO:0007005"/>
    <property type="project" value="TAIR"/>
</dbReference>
<dbReference type="GO" id="GO:0016020">
    <property type="term" value="C:membrane"/>
    <property type="evidence" value="ECO:0007669"/>
    <property type="project" value="UniProtKB-SubCell"/>
</dbReference>
<dbReference type="GO" id="GO:0005524">
    <property type="term" value="F:ATP binding"/>
    <property type="evidence" value="ECO:0007669"/>
    <property type="project" value="UniProtKB-KW"/>
</dbReference>
<dbReference type="GO" id="GO:0016887">
    <property type="term" value="F:ATP hydrolysis activity"/>
    <property type="evidence" value="ECO:0007669"/>
    <property type="project" value="InterPro"/>
</dbReference>
<dbReference type="GO" id="GO:0046872">
    <property type="term" value="F:metal ion binding"/>
    <property type="evidence" value="ECO:0007669"/>
    <property type="project" value="UniProtKB-KW"/>
</dbReference>
<dbReference type="GO" id="GO:0005388">
    <property type="term" value="F:P-type calcium transporter activity"/>
    <property type="evidence" value="ECO:0000250"/>
    <property type="project" value="TAIR"/>
</dbReference>
<dbReference type="FunFam" id="3.40.1110.10:FF:000021">
    <property type="entry name" value="calcium-transporting ATPase, endoplasmic reticulum-type"/>
    <property type="match status" value="1"/>
</dbReference>
<dbReference type="FunFam" id="2.70.150.10:FF:000014">
    <property type="entry name" value="Calcium-transporting ATPase, putative"/>
    <property type="match status" value="1"/>
</dbReference>
<dbReference type="FunFam" id="3.40.50.1000:FF:000028">
    <property type="entry name" value="Calcium-transporting P-type ATPase, putative"/>
    <property type="match status" value="1"/>
</dbReference>
<dbReference type="FunFam" id="1.20.1110.10:FF:000077">
    <property type="entry name" value="ECA1 (ER-TYPE CA2+-ATPASE 1)"/>
    <property type="match status" value="1"/>
</dbReference>
<dbReference type="FunFam" id="1.20.1110.10:FF:000065">
    <property type="entry name" value="Sarcoplasmic/endoplasmic reticulum calcium ATPase 1"/>
    <property type="match status" value="1"/>
</dbReference>
<dbReference type="Gene3D" id="3.40.1110.10">
    <property type="entry name" value="Calcium-transporting ATPase, cytoplasmic domain N"/>
    <property type="match status" value="1"/>
</dbReference>
<dbReference type="Gene3D" id="2.70.150.10">
    <property type="entry name" value="Calcium-transporting ATPase, cytoplasmic transduction domain A"/>
    <property type="match status" value="1"/>
</dbReference>
<dbReference type="Gene3D" id="1.20.1110.10">
    <property type="entry name" value="Calcium-transporting ATPase, transmembrane domain"/>
    <property type="match status" value="1"/>
</dbReference>
<dbReference type="Gene3D" id="3.40.50.1000">
    <property type="entry name" value="HAD superfamily/HAD-like"/>
    <property type="match status" value="1"/>
</dbReference>
<dbReference type="InterPro" id="IPR006068">
    <property type="entry name" value="ATPase_P-typ_cation-transptr_C"/>
</dbReference>
<dbReference type="InterPro" id="IPR004014">
    <property type="entry name" value="ATPase_P-typ_cation-transptr_N"/>
</dbReference>
<dbReference type="InterPro" id="IPR023299">
    <property type="entry name" value="ATPase_P-typ_cyto_dom_N"/>
</dbReference>
<dbReference type="InterPro" id="IPR018303">
    <property type="entry name" value="ATPase_P-typ_P_site"/>
</dbReference>
<dbReference type="InterPro" id="IPR023298">
    <property type="entry name" value="ATPase_P-typ_TM_dom_sf"/>
</dbReference>
<dbReference type="InterPro" id="IPR008250">
    <property type="entry name" value="ATPase_P-typ_transduc_dom_A_sf"/>
</dbReference>
<dbReference type="InterPro" id="IPR036412">
    <property type="entry name" value="HAD-like_sf"/>
</dbReference>
<dbReference type="InterPro" id="IPR023214">
    <property type="entry name" value="HAD_sf"/>
</dbReference>
<dbReference type="InterPro" id="IPR001757">
    <property type="entry name" value="P_typ_ATPase"/>
</dbReference>
<dbReference type="InterPro" id="IPR044492">
    <property type="entry name" value="P_typ_ATPase_HD_dom"/>
</dbReference>
<dbReference type="NCBIfam" id="TIGR01494">
    <property type="entry name" value="ATPase_P-type"/>
    <property type="match status" value="3"/>
</dbReference>
<dbReference type="PANTHER" id="PTHR42861">
    <property type="entry name" value="CALCIUM-TRANSPORTING ATPASE"/>
    <property type="match status" value="1"/>
</dbReference>
<dbReference type="Pfam" id="PF13246">
    <property type="entry name" value="Cation_ATPase"/>
    <property type="match status" value="1"/>
</dbReference>
<dbReference type="Pfam" id="PF00689">
    <property type="entry name" value="Cation_ATPase_C"/>
    <property type="match status" value="1"/>
</dbReference>
<dbReference type="Pfam" id="PF00690">
    <property type="entry name" value="Cation_ATPase_N"/>
    <property type="match status" value="1"/>
</dbReference>
<dbReference type="Pfam" id="PF00122">
    <property type="entry name" value="E1-E2_ATPase"/>
    <property type="match status" value="1"/>
</dbReference>
<dbReference type="Pfam" id="PF00702">
    <property type="entry name" value="Hydrolase"/>
    <property type="match status" value="1"/>
</dbReference>
<dbReference type="PRINTS" id="PR00119">
    <property type="entry name" value="CATATPASE"/>
</dbReference>
<dbReference type="SFLD" id="SFLDS00003">
    <property type="entry name" value="Haloacid_Dehalogenase"/>
    <property type="match status" value="1"/>
</dbReference>
<dbReference type="SFLD" id="SFLDF00027">
    <property type="entry name" value="p-type_atpase"/>
    <property type="match status" value="1"/>
</dbReference>
<dbReference type="SMART" id="SM00831">
    <property type="entry name" value="Cation_ATPase_N"/>
    <property type="match status" value="1"/>
</dbReference>
<dbReference type="SUPFAM" id="SSF81653">
    <property type="entry name" value="Calcium ATPase, transduction domain A"/>
    <property type="match status" value="1"/>
</dbReference>
<dbReference type="SUPFAM" id="SSF81665">
    <property type="entry name" value="Calcium ATPase, transmembrane domain M"/>
    <property type="match status" value="1"/>
</dbReference>
<dbReference type="SUPFAM" id="SSF56784">
    <property type="entry name" value="HAD-like"/>
    <property type="match status" value="1"/>
</dbReference>
<dbReference type="SUPFAM" id="SSF81660">
    <property type="entry name" value="Metal cation-transporting ATPase, ATP-binding domain N"/>
    <property type="match status" value="1"/>
</dbReference>
<dbReference type="PROSITE" id="PS00154">
    <property type="entry name" value="ATPASE_E1_E2"/>
    <property type="match status" value="1"/>
</dbReference>
<comment type="function">
    <text>This magnesium-dependent enzyme catalyzes the hydrolysis of ATP coupled with the translocation of calcium from the cytosol to an endomembrane compartment.</text>
</comment>
<comment type="catalytic activity">
    <reaction>
        <text>Ca(2+)(in) + ATP + H2O = Ca(2+)(out) + ADP + phosphate + H(+)</text>
        <dbReference type="Rhea" id="RHEA:18105"/>
        <dbReference type="ChEBI" id="CHEBI:15377"/>
        <dbReference type="ChEBI" id="CHEBI:15378"/>
        <dbReference type="ChEBI" id="CHEBI:29108"/>
        <dbReference type="ChEBI" id="CHEBI:30616"/>
        <dbReference type="ChEBI" id="CHEBI:43474"/>
        <dbReference type="ChEBI" id="CHEBI:456216"/>
        <dbReference type="EC" id="7.2.2.10"/>
    </reaction>
</comment>
<comment type="subcellular location">
    <subcellularLocation>
        <location>Membrane</location>
        <topology>Multi-pass membrane protein</topology>
    </subcellularLocation>
</comment>
<comment type="induction">
    <text evidence="4">Induced by cadmium.</text>
</comment>
<comment type="similarity">
    <text evidence="5">Belongs to the cation transport ATPase (P-type) (TC 3.A.3) family. Type IIA subfamily.</text>
</comment>
<proteinExistence type="evidence at transcript level"/>